<proteinExistence type="evidence at protein level"/>
<dbReference type="EC" id="3.2.1.40" evidence="1"/>
<dbReference type="EMBL" id="BA000030">
    <property type="protein sequence ID" value="BAC68538.1"/>
    <property type="molecule type" value="Genomic_DNA"/>
</dbReference>
<dbReference type="PDB" id="3W5M">
    <property type="method" value="X-ray"/>
    <property type="resolution" value="1.80 A"/>
    <property type="chains" value="A=1-1030"/>
</dbReference>
<dbReference type="PDB" id="3W5N">
    <property type="method" value="X-ray"/>
    <property type="resolution" value="1.80 A"/>
    <property type="chains" value="A=1-1030"/>
</dbReference>
<dbReference type="PDBsum" id="3W5M"/>
<dbReference type="PDBsum" id="3W5N"/>
<dbReference type="SMR" id="Q82PP4"/>
<dbReference type="KEGG" id="sma:SAVERM_828"/>
<dbReference type="eggNOG" id="COG3250">
    <property type="taxonomic scope" value="Bacteria"/>
</dbReference>
<dbReference type="HOGENOM" id="CLU_002926_3_0_11"/>
<dbReference type="BioCyc" id="MetaCyc:MONOMER-20550"/>
<dbReference type="EvolutionaryTrace" id="Q82PP4"/>
<dbReference type="Proteomes" id="UP000000428">
    <property type="component" value="Chromosome"/>
</dbReference>
<dbReference type="GO" id="GO:0030596">
    <property type="term" value="F:alpha-L-rhamnosidase activity"/>
    <property type="evidence" value="ECO:0007669"/>
    <property type="project" value="UniProtKB-EC"/>
</dbReference>
<dbReference type="GO" id="GO:0046872">
    <property type="term" value="F:metal ion binding"/>
    <property type="evidence" value="ECO:0007669"/>
    <property type="project" value="UniProtKB-KW"/>
</dbReference>
<dbReference type="GO" id="GO:0005975">
    <property type="term" value="P:carbohydrate metabolic process"/>
    <property type="evidence" value="ECO:0007669"/>
    <property type="project" value="InterPro"/>
</dbReference>
<dbReference type="Gene3D" id="1.50.10.10">
    <property type="match status" value="1"/>
</dbReference>
<dbReference type="Gene3D" id="2.60.120.260">
    <property type="entry name" value="Galactose-binding domain-like"/>
    <property type="match status" value="3"/>
</dbReference>
<dbReference type="Gene3D" id="2.60.40.10">
    <property type="entry name" value="Immunoglobulins"/>
    <property type="match status" value="1"/>
</dbReference>
<dbReference type="Gene3D" id="2.60.420.10">
    <property type="entry name" value="Maltose phosphorylase, domain 3"/>
    <property type="match status" value="1"/>
</dbReference>
<dbReference type="InterPro" id="IPR008928">
    <property type="entry name" value="6-hairpin_glycosidase_sf"/>
</dbReference>
<dbReference type="InterPro" id="IPR012341">
    <property type="entry name" value="6hp_glycosidase-like_sf"/>
</dbReference>
<dbReference type="InterPro" id="IPR016007">
    <property type="entry name" value="Alpha_rhamnosid"/>
</dbReference>
<dbReference type="InterPro" id="IPR035396">
    <property type="entry name" value="Bac_rhamnosid6H"/>
</dbReference>
<dbReference type="InterPro" id="IPR035398">
    <property type="entry name" value="Bac_rhamnosid_C"/>
</dbReference>
<dbReference type="InterPro" id="IPR013737">
    <property type="entry name" value="Bac_rhamnosid_N"/>
</dbReference>
<dbReference type="InterPro" id="IPR036116">
    <property type="entry name" value="FN3_sf"/>
</dbReference>
<dbReference type="InterPro" id="IPR008979">
    <property type="entry name" value="Galactose-bd-like_sf"/>
</dbReference>
<dbReference type="InterPro" id="IPR053565">
    <property type="entry name" value="GH78"/>
</dbReference>
<dbReference type="InterPro" id="IPR013783">
    <property type="entry name" value="Ig-like_fold"/>
</dbReference>
<dbReference type="InterPro" id="IPR008902">
    <property type="entry name" value="Rhamnosid_concanavalin"/>
</dbReference>
<dbReference type="NCBIfam" id="NF041573">
    <property type="entry name" value="rhamnosid_Stmyc"/>
    <property type="match status" value="1"/>
</dbReference>
<dbReference type="PANTHER" id="PTHR33307">
    <property type="entry name" value="ALPHA-RHAMNOSIDASE (EUROFUNG)"/>
    <property type="match status" value="1"/>
</dbReference>
<dbReference type="PANTHER" id="PTHR33307:SF6">
    <property type="entry name" value="ALPHA-RHAMNOSIDASE (EUROFUNG)-RELATED"/>
    <property type="match status" value="1"/>
</dbReference>
<dbReference type="Pfam" id="PF05592">
    <property type="entry name" value="Bac_rhamnosid"/>
    <property type="match status" value="1"/>
</dbReference>
<dbReference type="Pfam" id="PF17389">
    <property type="entry name" value="Bac_rhamnosid6H"/>
    <property type="match status" value="1"/>
</dbReference>
<dbReference type="Pfam" id="PF17390">
    <property type="entry name" value="Bac_rhamnosid_C"/>
    <property type="match status" value="1"/>
</dbReference>
<dbReference type="Pfam" id="PF08531">
    <property type="entry name" value="Bac_rhamnosid_N"/>
    <property type="match status" value="1"/>
</dbReference>
<dbReference type="PIRSF" id="PIRSF010631">
    <property type="entry name" value="A-rhamnsds"/>
    <property type="match status" value="1"/>
</dbReference>
<dbReference type="SUPFAM" id="SSF49265">
    <property type="entry name" value="Fibronectin type III"/>
    <property type="match status" value="1"/>
</dbReference>
<dbReference type="SUPFAM" id="SSF49785">
    <property type="entry name" value="Galactose-binding domain-like"/>
    <property type="match status" value="2"/>
</dbReference>
<dbReference type="SUPFAM" id="SSF48208">
    <property type="entry name" value="Six-hairpin glycosidases"/>
    <property type="match status" value="1"/>
</dbReference>
<feature type="chain" id="PRO_0000448313" description="Alpha-L-rhamnosidase">
    <location>
        <begin position="1"/>
        <end position="1030"/>
    </location>
</feature>
<feature type="region of interest" description="Carbohydrate-binding module-67 (CBM67)" evidence="5">
    <location>
        <begin position="133"/>
        <end position="297"/>
    </location>
</feature>
<feature type="active site" description="Proton donor" evidence="5">
    <location>
        <position position="636"/>
    </location>
</feature>
<feature type="active site" description="Proton acceptor" evidence="5">
    <location>
        <position position="895"/>
    </location>
</feature>
<feature type="binding site" evidence="8">
    <location>
        <begin position="179"/>
        <end position="180"/>
    </location>
    <ligand>
        <name>alpha-L-rhamnose</name>
        <dbReference type="ChEBI" id="CHEBI:27907"/>
        <label>2</label>
    </ligand>
</feature>
<feature type="binding site" evidence="7 8">
    <location>
        <position position="179"/>
    </location>
    <ligand>
        <name>Ca(2+)</name>
        <dbReference type="ChEBI" id="CHEBI:29108"/>
    </ligand>
</feature>
<feature type="binding site" evidence="7">
    <location>
        <position position="180"/>
    </location>
    <ligand>
        <name>Ca(2+)</name>
        <dbReference type="ChEBI" id="CHEBI:29108"/>
    </ligand>
</feature>
<feature type="binding site" evidence="8">
    <location>
        <position position="203"/>
    </location>
    <ligand>
        <name>alpha-L-rhamnose</name>
        <dbReference type="ChEBI" id="CHEBI:27907"/>
        <label>2</label>
    </ligand>
</feature>
<feature type="binding site" evidence="8">
    <location>
        <position position="228"/>
    </location>
    <ligand>
        <name>Ca(2+)</name>
        <dbReference type="ChEBI" id="CHEBI:29108"/>
    </ligand>
</feature>
<feature type="binding site" evidence="7 8">
    <location>
        <position position="233"/>
    </location>
    <ligand>
        <name>Ca(2+)</name>
        <dbReference type="ChEBI" id="CHEBI:29108"/>
    </ligand>
</feature>
<feature type="binding site" evidence="8">
    <location>
        <position position="630"/>
    </location>
    <ligand>
        <name>alpha-L-rhamnose</name>
        <dbReference type="ChEBI" id="CHEBI:27907"/>
        <label>1</label>
    </ligand>
</feature>
<feature type="binding site" evidence="8">
    <location>
        <begin position="634"/>
        <end position="636"/>
    </location>
    <ligand>
        <name>alpha-L-rhamnose</name>
        <dbReference type="ChEBI" id="CHEBI:27907"/>
        <label>1</label>
    </ligand>
</feature>
<feature type="binding site" evidence="8">
    <location>
        <position position="643"/>
    </location>
    <ligand>
        <name>alpha-L-rhamnose</name>
        <dbReference type="ChEBI" id="CHEBI:27907"/>
        <label>1</label>
    </ligand>
</feature>
<feature type="binding site" evidence="8">
    <location>
        <position position="695"/>
    </location>
    <ligand>
        <name>alpha-L-rhamnose</name>
        <dbReference type="ChEBI" id="CHEBI:27907"/>
        <label>1</label>
    </ligand>
</feature>
<feature type="binding site" evidence="8">
    <location>
        <position position="916"/>
    </location>
    <ligand>
        <name>alpha-L-rhamnose</name>
        <dbReference type="ChEBI" id="CHEBI:27907"/>
        <label>1</label>
    </ligand>
</feature>
<feature type="mutagenesis site" description="Abrogates L-rhamnose binding." evidence="2">
    <original>D</original>
    <variation>A</variation>
    <location>
        <position position="179"/>
    </location>
</feature>
<feature type="mutagenesis site" description="Abrogates L-rhamnose binding." evidence="2">
    <original>N</original>
    <variation>A</variation>
    <location>
        <position position="180"/>
    </location>
</feature>
<feature type="mutagenesis site" description="Drastically reduces alpha-L-rhamnosidase activity." evidence="2">
    <original>E</original>
    <variation>D</variation>
    <variation>Q</variation>
    <location>
        <position position="636"/>
    </location>
</feature>
<feature type="mutagenesis site" description="Drastically reduces alpha-L-rhamnosidase activity." evidence="2">
    <original>E</original>
    <variation>D</variation>
    <variation>Q</variation>
    <location>
        <position position="895"/>
    </location>
</feature>
<feature type="strand" evidence="9">
    <location>
        <begin position="14"/>
        <end position="16"/>
    </location>
</feature>
<feature type="strand" evidence="9">
    <location>
        <begin position="18"/>
        <end position="20"/>
    </location>
</feature>
<feature type="strand" evidence="9">
    <location>
        <begin position="26"/>
        <end position="28"/>
    </location>
</feature>
<feature type="strand" evidence="9">
    <location>
        <begin position="34"/>
        <end position="37"/>
    </location>
</feature>
<feature type="strand" evidence="9">
    <location>
        <begin position="40"/>
        <end position="51"/>
    </location>
</feature>
<feature type="helix" evidence="9">
    <location>
        <begin position="52"/>
        <end position="55"/>
    </location>
</feature>
<feature type="strand" evidence="9">
    <location>
        <begin position="58"/>
        <end position="61"/>
    </location>
</feature>
<feature type="strand" evidence="9">
    <location>
        <begin position="71"/>
        <end position="74"/>
    </location>
</feature>
<feature type="strand" evidence="9">
    <location>
        <begin position="85"/>
        <end position="97"/>
    </location>
</feature>
<feature type="strand" evidence="9">
    <location>
        <begin position="106"/>
        <end position="110"/>
    </location>
</feature>
<feature type="helix" evidence="9">
    <location>
        <begin position="115"/>
        <end position="117"/>
    </location>
</feature>
<feature type="helix" evidence="9">
    <location>
        <begin position="127"/>
        <end position="130"/>
    </location>
</feature>
<feature type="strand" evidence="9">
    <location>
        <begin position="139"/>
        <end position="142"/>
    </location>
</feature>
<feature type="strand" evidence="9">
    <location>
        <begin position="144"/>
        <end position="147"/>
    </location>
</feature>
<feature type="turn" evidence="9">
    <location>
        <begin position="148"/>
        <end position="150"/>
    </location>
</feature>
<feature type="strand" evidence="9">
    <location>
        <begin position="156"/>
        <end position="165"/>
    </location>
</feature>
<feature type="strand" evidence="9">
    <location>
        <begin position="171"/>
        <end position="186"/>
    </location>
</feature>
<feature type="strand" evidence="9">
    <location>
        <begin position="189"/>
        <end position="193"/>
    </location>
</feature>
<feature type="turn" evidence="9">
    <location>
        <begin position="196"/>
        <end position="198"/>
    </location>
</feature>
<feature type="helix" evidence="9">
    <location>
        <begin position="202"/>
        <end position="204"/>
    </location>
</feature>
<feature type="strand" evidence="9">
    <location>
        <begin position="207"/>
        <end position="210"/>
    </location>
</feature>
<feature type="turn" evidence="9">
    <location>
        <begin position="212"/>
        <end position="214"/>
    </location>
</feature>
<feature type="strand" evidence="9">
    <location>
        <begin position="217"/>
        <end position="227"/>
    </location>
</feature>
<feature type="strand" evidence="9">
    <location>
        <begin position="229"/>
        <end position="232"/>
    </location>
</feature>
<feature type="strand" evidence="9">
    <location>
        <begin position="235"/>
        <end position="244"/>
    </location>
</feature>
<feature type="strand" evidence="9">
    <location>
        <begin position="247"/>
        <end position="254"/>
    </location>
</feature>
<feature type="strand" evidence="9">
    <location>
        <begin position="257"/>
        <end position="262"/>
    </location>
</feature>
<feature type="turn" evidence="9">
    <location>
        <begin position="266"/>
        <end position="269"/>
    </location>
</feature>
<feature type="strand" evidence="9">
    <location>
        <begin position="282"/>
        <end position="286"/>
    </location>
</feature>
<feature type="turn" evidence="9">
    <location>
        <begin position="290"/>
        <end position="292"/>
    </location>
</feature>
<feature type="strand" evidence="9">
    <location>
        <begin position="303"/>
        <end position="311"/>
    </location>
</feature>
<feature type="strand" evidence="9">
    <location>
        <begin position="316"/>
        <end position="333"/>
    </location>
</feature>
<feature type="strand" evidence="9">
    <location>
        <begin position="342"/>
        <end position="344"/>
    </location>
</feature>
<feature type="turn" evidence="9">
    <location>
        <begin position="350"/>
        <end position="352"/>
    </location>
</feature>
<feature type="strand" evidence="9">
    <location>
        <begin position="353"/>
        <end position="360"/>
    </location>
</feature>
<feature type="turn" evidence="9">
    <location>
        <begin position="362"/>
        <end position="364"/>
    </location>
</feature>
<feature type="strand" evidence="9">
    <location>
        <begin position="367"/>
        <end position="377"/>
    </location>
</feature>
<feature type="helix" evidence="9">
    <location>
        <begin position="379"/>
        <end position="382"/>
    </location>
</feature>
<feature type="strand" evidence="9">
    <location>
        <begin position="398"/>
        <end position="407"/>
    </location>
</feature>
<feature type="strand" evidence="9">
    <location>
        <begin position="412"/>
        <end position="416"/>
    </location>
</feature>
<feature type="strand" evidence="9">
    <location>
        <begin position="422"/>
        <end position="424"/>
    </location>
</feature>
<feature type="strand" evidence="9">
    <location>
        <begin position="427"/>
        <end position="432"/>
    </location>
</feature>
<feature type="turn" evidence="9">
    <location>
        <begin position="433"/>
        <end position="435"/>
    </location>
</feature>
<feature type="strand" evidence="9">
    <location>
        <begin position="436"/>
        <end position="440"/>
    </location>
</feature>
<feature type="helix" evidence="9">
    <location>
        <begin position="441"/>
        <end position="443"/>
    </location>
</feature>
<feature type="turn" evidence="9">
    <location>
        <begin position="446"/>
        <end position="449"/>
    </location>
</feature>
<feature type="strand" evidence="9">
    <location>
        <begin position="458"/>
        <end position="460"/>
    </location>
</feature>
<feature type="strand" evidence="9">
    <location>
        <begin position="470"/>
        <end position="474"/>
    </location>
</feature>
<feature type="strand" evidence="9">
    <location>
        <begin position="480"/>
        <end position="487"/>
    </location>
</feature>
<feature type="strand" evidence="9">
    <location>
        <begin position="490"/>
        <end position="495"/>
    </location>
</feature>
<feature type="strand" evidence="9">
    <location>
        <begin position="498"/>
        <end position="515"/>
    </location>
</feature>
<feature type="strand" evidence="9">
    <location>
        <begin position="522"/>
        <end position="531"/>
    </location>
</feature>
<feature type="helix" evidence="9">
    <location>
        <begin position="540"/>
        <end position="542"/>
    </location>
</feature>
<feature type="strand" evidence="9">
    <location>
        <begin position="548"/>
        <end position="552"/>
    </location>
</feature>
<feature type="strand" evidence="9">
    <location>
        <begin position="557"/>
        <end position="561"/>
    </location>
</feature>
<feature type="strand" evidence="9">
    <location>
        <begin position="568"/>
        <end position="577"/>
    </location>
</feature>
<feature type="helix" evidence="9">
    <location>
        <begin position="584"/>
        <end position="586"/>
    </location>
</feature>
<feature type="strand" evidence="9">
    <location>
        <begin position="587"/>
        <end position="595"/>
    </location>
</feature>
<feature type="strand" evidence="9">
    <location>
        <begin position="600"/>
        <end position="605"/>
    </location>
</feature>
<feature type="helix" evidence="9">
    <location>
        <begin position="607"/>
        <end position="622"/>
    </location>
</feature>
<feature type="strand" evidence="9">
    <location>
        <begin position="624"/>
        <end position="628"/>
    </location>
</feature>
<feature type="strand" evidence="9">
    <location>
        <begin position="632"/>
        <end position="635"/>
    </location>
</feature>
<feature type="helix" evidence="9">
    <location>
        <begin position="641"/>
        <end position="654"/>
    </location>
</feature>
<feature type="helix" evidence="9">
    <location>
        <begin position="658"/>
        <end position="671"/>
    </location>
</feature>
<feature type="strand" evidence="9">
    <location>
        <begin position="679"/>
        <end position="683"/>
    </location>
</feature>
<feature type="turn" evidence="9">
    <location>
        <begin position="693"/>
        <end position="697"/>
    </location>
</feature>
<feature type="helix" evidence="9">
    <location>
        <begin position="698"/>
        <end position="710"/>
    </location>
</feature>
<feature type="helix" evidence="9">
    <location>
        <begin position="713"/>
        <end position="732"/>
    </location>
</feature>
<feature type="helix" evidence="9">
    <location>
        <begin position="756"/>
        <end position="777"/>
    </location>
</feature>
<feature type="helix" evidence="9">
    <location>
        <begin position="783"/>
        <end position="800"/>
    </location>
</feature>
<feature type="helix" evidence="9">
    <location>
        <begin position="812"/>
        <end position="820"/>
    </location>
</feature>
<feature type="helix" evidence="9">
    <location>
        <begin position="826"/>
        <end position="828"/>
    </location>
</feature>
<feature type="helix" evidence="9">
    <location>
        <begin position="829"/>
        <end position="842"/>
    </location>
</feature>
<feature type="turn" evidence="9">
    <location>
        <begin position="851"/>
        <end position="853"/>
    </location>
</feature>
<feature type="helix" evidence="9">
    <location>
        <begin position="854"/>
        <end position="863"/>
    </location>
</feature>
<feature type="helix" evidence="9">
    <location>
        <begin position="867"/>
        <end position="875"/>
    </location>
</feature>
<feature type="strand" evidence="9">
    <location>
        <begin position="878"/>
        <end position="882"/>
    </location>
</feature>
<feature type="helix" evidence="9">
    <location>
        <begin position="883"/>
        <end position="887"/>
    </location>
</feature>
<feature type="helix" evidence="9">
    <location>
        <begin position="918"/>
        <end position="922"/>
    </location>
</feature>
<feature type="helix" evidence="9">
    <location>
        <begin position="923"/>
        <end position="929"/>
    </location>
</feature>
<feature type="strand" evidence="9">
    <location>
        <begin position="934"/>
        <end position="937"/>
    </location>
</feature>
<feature type="helix" evidence="9">
    <location>
        <begin position="938"/>
        <end position="940"/>
    </location>
</feature>
<feature type="strand" evidence="9">
    <location>
        <begin position="942"/>
        <end position="945"/>
    </location>
</feature>
<feature type="strand" evidence="9">
    <location>
        <begin position="955"/>
        <end position="962"/>
    </location>
</feature>
<feature type="strand" evidence="9">
    <location>
        <begin position="965"/>
        <end position="974"/>
    </location>
</feature>
<feature type="strand" evidence="9">
    <location>
        <begin position="977"/>
        <end position="984"/>
    </location>
</feature>
<feature type="strand" evidence="9">
    <location>
        <begin position="989"/>
        <end position="995"/>
    </location>
</feature>
<feature type="helix" evidence="9">
    <location>
        <begin position="999"/>
        <end position="1001"/>
    </location>
</feature>
<feature type="strand" evidence="9">
    <location>
        <begin position="1003"/>
        <end position="1013"/>
    </location>
</feature>
<feature type="strand" evidence="9">
    <location>
        <begin position="1016"/>
        <end position="1021"/>
    </location>
</feature>
<feature type="strand" evidence="9">
    <location>
        <begin position="1023"/>
        <end position="1030"/>
    </location>
</feature>
<sequence length="1030" mass="111886">MSALRVTSPSVEYVQRPLGLDAAHPRLSWPMASAAPGRRQSAYQVRVASSAAGLSHPDVWDSGKVVSDDSVLVPYAGPPLKPRTRYFWSVRVWDADGGASEWSAPSWWETGLMGASQWSAKWISAPAPLTEAPSLEGSSWIWFPEGEPANSAPAATRWFRRTVDLPDDITGATLAISADNVYAVSVDGAEVARTDLEADNEGWRRPAVIDVLDHVHSGNNTLAVSASNASVGPAGWICVLVLTTASGEKKIFSDASWKSTDHEPADGWREPDFDDSGWPAAKVAAAWGAGPWGRVAPVASAANQLRHEFRLPHKKVSRARLYATALGLYEAHLNGRRVGRDQLAPGWTDYRKRVQYQTYDVTSSVRPGANALAAYVAPGWYAGNVGMFGPHQYGERPALLAQLEVEYADGTSERITSGPDWRAASGPIVSADLLSGETYDARKETAGWTSPGFDDRAWLAVRGADNDVPEQIVAQVDGPVRIAKELPARKVTEPKPGVFVLDLGQNMVGSVRLRVSGDAGTTVRLRHAEVLNPDGTIYTANLRSAAATDTYTLKGQGEETYEPRFTFHGFRYVEVTGFPGKPSTTSVTGRVMHTSAPFTFEFETNVPMLNKLHSNITWGQRGNFLSVPTDTPARDERLGWTGDINVFAPTAAYTMESARFLTKWLVDLRDAQTSDGAFTDVAPAVGNLGNGVAGWGDAGVTVPWALYQAYGDRQVLADALPSVHAWLRYLEKHSDGLLRPADGYGDWLNVSDETPKDVIATAYFAHSADLAARMATELGKDAAPYTDLFTRIRKAFQTAYVASDGKVKGDTQSAYVLTLSMNLVPDALRKAAADRLVALIEAKDWHLSTGFLGTPRLLPVLTDTGHTDVAYRLLHQRTFPSWGYPIDKGSTTMWERWDSIQPDGGFQTPEMNSFNHYAYGSVGEWMYANIAGIAPGRAGYRQVVIRPRPGGEVTSARATFASLHGPVSTRWQQRSGGFVLTCSVPPNTTAEVWIPADHPDRVQHTHGTFVRAEDGCAVFEVGSGSHRFTV</sequence>
<accession>Q82PP4</accession>
<organism>
    <name type="scientific">Streptomyces avermitilis (strain ATCC 31267 / DSM 46492 / JCM 5070 / NBRC 14893 / NCIMB 12804 / NRRL 8165 / MA-4680)</name>
    <dbReference type="NCBI Taxonomy" id="227882"/>
    <lineage>
        <taxon>Bacteria</taxon>
        <taxon>Bacillati</taxon>
        <taxon>Actinomycetota</taxon>
        <taxon>Actinomycetes</taxon>
        <taxon>Kitasatosporales</taxon>
        <taxon>Streptomycetaceae</taxon>
        <taxon>Streptomyces</taxon>
    </lineage>
</organism>
<comment type="function">
    <text evidence="1">Alpha-L-rhamnosidase which is able to degrade p-nitrophenyl-alpha-L-rhamnopyranoside (PNP-Rha) in vitro. Releases L-rhamnose from citrus flavonoids such as naringin, rutin and hesperidin, and the arabinogalactan-protein (AGP) gum arabic. AGPs are a family of proteoglycans that are localized on the cell surfaces of higher plants. Cleaves both the alpha-1,6 and the alpha-1,2-linked rhamnosyl residues.</text>
</comment>
<comment type="catalytic activity">
    <reaction evidence="1">
        <text>Hydrolysis of terminal non-reducing alpha-L-rhamnose residues in alpha-L-rhamnosides.</text>
        <dbReference type="EC" id="3.2.1.40"/>
    </reaction>
</comment>
<comment type="biophysicochemical properties">
    <kinetics>
        <KM evidence="1">0.03 mM for p-nitrophenyl-alpha-L-rhamnopyranoside</KM>
        <text evidence="1">kcat is 1.93 sec(-1) with p-nitrophenyl-alpha-L-rhamnopyranoside as substrate.</text>
    </kinetics>
    <phDependence>
        <text evidence="1">Optimum pH is 6.</text>
    </phDependence>
    <temperatureDependence>
        <text evidence="1">Optimum temperature is 50 degrees Celsius.</text>
    </temperatureDependence>
</comment>
<comment type="domain">
    <text evidence="1">The carbohydrate-binding module-67 (CBM67) binds L-rhamnose, it does not bind L-galactose or L-fucose, demonstrating that stereochemistry of the sugar at C4 and/or C2 are important specificity determinants. Also, removal of calcium through chelation or mutation abrogates L-rhamnose binding, confirming the importance of calcium in the binding of its ligand.</text>
</comment>
<comment type="similarity">
    <text evidence="4">Belongs to the glycosyl hydrolase 78 family.</text>
</comment>
<protein>
    <recommendedName>
        <fullName evidence="3">Alpha-L-rhamnosidase</fullName>
        <ecNumber evidence="1">3.2.1.40</ecNumber>
    </recommendedName>
    <alternativeName>
        <fullName evidence="3">Rha78A</fullName>
    </alternativeName>
</protein>
<gene>
    <name evidence="6" type="ordered locus">SAV_828</name>
    <name evidence="6" type="ORF">SAVERM_828</name>
</gene>
<evidence type="ECO:0000269" key="1">
    <source>
    </source>
</evidence>
<evidence type="ECO:0000269" key="2">
    <source>
    </source>
</evidence>
<evidence type="ECO:0000303" key="3">
    <source>
    </source>
</evidence>
<evidence type="ECO:0000305" key="4"/>
<evidence type="ECO:0000305" key="5">
    <source>
    </source>
</evidence>
<evidence type="ECO:0000312" key="6">
    <source>
        <dbReference type="EMBL" id="BAC68538.1"/>
    </source>
</evidence>
<evidence type="ECO:0007744" key="7">
    <source>
        <dbReference type="PDB" id="3W5M"/>
    </source>
</evidence>
<evidence type="ECO:0007744" key="8">
    <source>
        <dbReference type="PDB" id="3W5N"/>
    </source>
</evidence>
<evidence type="ECO:0007829" key="9">
    <source>
        <dbReference type="PDB" id="3W5M"/>
    </source>
</evidence>
<reference key="1">
    <citation type="journal article" date="2001" name="Proc. Natl. Acad. Sci. U.S.A.">
        <title>Genome sequence of an industrial microorganism Streptomyces avermitilis: deducing the ability of producing secondary metabolites.</title>
        <authorList>
            <person name="Omura S."/>
            <person name="Ikeda H."/>
            <person name="Ishikawa J."/>
            <person name="Hanamoto A."/>
            <person name="Takahashi C."/>
            <person name="Shinose M."/>
            <person name="Takahashi Y."/>
            <person name="Horikawa H."/>
            <person name="Nakazawa H."/>
            <person name="Osonoe T."/>
            <person name="Kikuchi H."/>
            <person name="Shiba T."/>
            <person name="Sakaki Y."/>
            <person name="Hattori M."/>
        </authorList>
    </citation>
    <scope>NUCLEOTIDE SEQUENCE [LARGE SCALE GENOMIC DNA]</scope>
    <source>
        <strain>ATCC 31267 / DSM 46492 / JCM 5070 / NBRC 14893 / NCIMB 12804 / NRRL 8165 / MA-4680</strain>
    </source>
</reference>
<reference key="2">
    <citation type="journal article" date="2003" name="Nat. Biotechnol.">
        <title>Complete genome sequence and comparative analysis of the industrial microorganism Streptomyces avermitilis.</title>
        <authorList>
            <person name="Ikeda H."/>
            <person name="Ishikawa J."/>
            <person name="Hanamoto A."/>
            <person name="Shinose M."/>
            <person name="Kikuchi H."/>
            <person name="Shiba T."/>
            <person name="Sakaki Y."/>
            <person name="Hattori M."/>
            <person name="Omura S."/>
        </authorList>
    </citation>
    <scope>NUCLEOTIDE SEQUENCE [LARGE SCALE GENOMIC DNA]</scope>
    <source>
        <strain>ATCC 31267 / DSM 46492 / JCM 5070 / NBRC 14893 / NCIMB 12804 / NRRL 8165 / MA-4680</strain>
    </source>
</reference>
<reference key="3">
    <citation type="journal article" date="2013" name="Biosci. Biotechnol. Biochem.">
        <title>Characterization of an alpha-L-Rhamnosidase from Streptomyces avermitilis.</title>
        <authorList>
            <person name="Ichinose H."/>
            <person name="Fujimoto Z."/>
            <person name="Kaneko S."/>
        </authorList>
    </citation>
    <scope>FUNCTION</scope>
    <scope>CATALYTIC ACTIVITY</scope>
    <scope>BIOPHYSICOCHEMICAL PROPERTIES</scope>
    <scope>SUBSTRATE SPECIFICITY</scope>
</reference>
<reference evidence="7 8" key="4">
    <citation type="journal article" date="2013" name="J. Biol. Chem.">
        <title>The structure of a Streptomyces avermitilis alpha-L-rhamnosidase reveals a novel carbohydrate-binding module CBM67 within the six-domain arrangement.</title>
        <authorList>
            <person name="Fujimoto Z."/>
            <person name="Jackson A."/>
            <person name="Michikawa M."/>
            <person name="Maehara T."/>
            <person name="Momma M."/>
            <person name="Henrissat B."/>
            <person name="Gilbert H.J."/>
            <person name="Kaneko S."/>
        </authorList>
    </citation>
    <scope>X-RAY CRYSTALLOGRAPHY (1.80 ANGSTROMS) IN COMPLEX WITH CALCIUM AND L-RHAMNOSE</scope>
    <scope>MUTAGENESIS OF ASP-179; ASN-180; GLU-636 AND GLU-895</scope>
</reference>
<name>RHA78_STRAW</name>
<keyword id="KW-0002">3D-structure</keyword>
<keyword id="KW-0106">Calcium</keyword>
<keyword id="KW-0378">Hydrolase</keyword>
<keyword id="KW-0479">Metal-binding</keyword>
<keyword id="KW-1185">Reference proteome</keyword>